<feature type="chain" id="PRO_0000060239" description="Inner membrane ABC transporter permease protein YcjO">
    <location>
        <begin position="1"/>
        <end position="293"/>
    </location>
</feature>
<feature type="topological domain" description="Periplasmic" evidence="1">
    <location>
        <begin position="1"/>
        <end position="12"/>
    </location>
</feature>
<feature type="transmembrane region" description="Helical" evidence="2">
    <location>
        <begin position="13"/>
        <end position="33"/>
    </location>
</feature>
<feature type="topological domain" description="Cytoplasmic" evidence="1">
    <location>
        <begin position="34"/>
        <end position="77"/>
    </location>
</feature>
<feature type="transmembrane region" description="Helical" evidence="2">
    <location>
        <begin position="78"/>
        <end position="98"/>
    </location>
</feature>
<feature type="topological domain" description="Periplasmic" evidence="1">
    <location>
        <begin position="99"/>
        <end position="110"/>
    </location>
</feature>
<feature type="transmembrane region" description="Helical" evidence="2">
    <location>
        <begin position="111"/>
        <end position="131"/>
    </location>
</feature>
<feature type="topological domain" description="Cytoplasmic" evidence="1">
    <location>
        <begin position="132"/>
        <end position="135"/>
    </location>
</feature>
<feature type="transmembrane region" description="Helical" evidence="2">
    <location>
        <begin position="136"/>
        <end position="156"/>
    </location>
</feature>
<feature type="topological domain" description="Periplasmic" evidence="1">
    <location>
        <begin position="157"/>
        <end position="162"/>
    </location>
</feature>
<feature type="transmembrane region" description="Helical" evidence="2">
    <location>
        <begin position="163"/>
        <end position="183"/>
    </location>
</feature>
<feature type="topological domain" description="Cytoplasmic" evidence="1">
    <location>
        <begin position="184"/>
        <end position="214"/>
    </location>
</feature>
<feature type="transmembrane region" description="Helical" evidence="2">
    <location>
        <begin position="215"/>
        <end position="235"/>
    </location>
</feature>
<feature type="topological domain" description="Periplasmic" evidence="1">
    <location>
        <begin position="236"/>
        <end position="261"/>
    </location>
</feature>
<feature type="transmembrane region" description="Helical" evidence="2">
    <location>
        <begin position="262"/>
        <end position="282"/>
    </location>
</feature>
<feature type="topological domain" description="Cytoplasmic" evidence="1">
    <location>
        <begin position="283"/>
        <end position="293"/>
    </location>
</feature>
<feature type="domain" description="ABC transmembrane type-1" evidence="2">
    <location>
        <begin position="73"/>
        <end position="283"/>
    </location>
</feature>
<keyword id="KW-0997">Cell inner membrane</keyword>
<keyword id="KW-1003">Cell membrane</keyword>
<keyword id="KW-0472">Membrane</keyword>
<keyword id="KW-1185">Reference proteome</keyword>
<keyword id="KW-0812">Transmembrane</keyword>
<keyword id="KW-1133">Transmembrane helix</keyword>
<keyword id="KW-0813">Transport</keyword>
<organism>
    <name type="scientific">Escherichia coli (strain K12)</name>
    <dbReference type="NCBI Taxonomy" id="83333"/>
    <lineage>
        <taxon>Bacteria</taxon>
        <taxon>Pseudomonadati</taxon>
        <taxon>Pseudomonadota</taxon>
        <taxon>Gammaproteobacteria</taxon>
        <taxon>Enterobacterales</taxon>
        <taxon>Enterobacteriaceae</taxon>
        <taxon>Escherichia</taxon>
    </lineage>
</organism>
<name>YCJO_ECOLI</name>
<evidence type="ECO:0000255" key="1"/>
<evidence type="ECO:0000255" key="2">
    <source>
        <dbReference type="PROSITE-ProRule" id="PRU00441"/>
    </source>
</evidence>
<evidence type="ECO:0000305" key="3"/>
<reference key="1">
    <citation type="journal article" date="1996" name="DNA Res.">
        <title>A 570-kb DNA sequence of the Escherichia coli K-12 genome corresponding to the 28.0-40.1 min region on the linkage map.</title>
        <authorList>
            <person name="Aiba H."/>
            <person name="Baba T."/>
            <person name="Fujita K."/>
            <person name="Hayashi K."/>
            <person name="Inada T."/>
            <person name="Isono K."/>
            <person name="Itoh T."/>
            <person name="Kasai H."/>
            <person name="Kashimoto K."/>
            <person name="Kimura S."/>
            <person name="Kitakawa M."/>
            <person name="Kitagawa M."/>
            <person name="Makino K."/>
            <person name="Miki T."/>
            <person name="Mizobuchi K."/>
            <person name="Mori H."/>
            <person name="Mori T."/>
            <person name="Motomura K."/>
            <person name="Nakade S."/>
            <person name="Nakamura Y."/>
            <person name="Nashimoto H."/>
            <person name="Nishio Y."/>
            <person name="Oshima T."/>
            <person name="Saito N."/>
            <person name="Sampei G."/>
            <person name="Seki Y."/>
            <person name="Sivasundaram S."/>
            <person name="Tagami H."/>
            <person name="Takeda J."/>
            <person name="Takemoto K."/>
            <person name="Takeuchi Y."/>
            <person name="Wada C."/>
            <person name="Yamamoto Y."/>
            <person name="Horiuchi T."/>
        </authorList>
    </citation>
    <scope>NUCLEOTIDE SEQUENCE [LARGE SCALE GENOMIC DNA]</scope>
    <source>
        <strain>K12 / W3110 / ATCC 27325 / DSM 5911</strain>
    </source>
</reference>
<reference key="2">
    <citation type="journal article" date="1997" name="Science">
        <title>The complete genome sequence of Escherichia coli K-12.</title>
        <authorList>
            <person name="Blattner F.R."/>
            <person name="Plunkett G. III"/>
            <person name="Bloch C.A."/>
            <person name="Perna N.T."/>
            <person name="Burland V."/>
            <person name="Riley M."/>
            <person name="Collado-Vides J."/>
            <person name="Glasner J.D."/>
            <person name="Rode C.K."/>
            <person name="Mayhew G.F."/>
            <person name="Gregor J."/>
            <person name="Davis N.W."/>
            <person name="Kirkpatrick H.A."/>
            <person name="Goeden M.A."/>
            <person name="Rose D.J."/>
            <person name="Mau B."/>
            <person name="Shao Y."/>
        </authorList>
    </citation>
    <scope>NUCLEOTIDE SEQUENCE [LARGE SCALE GENOMIC DNA]</scope>
    <source>
        <strain>K12 / MG1655 / ATCC 47076</strain>
    </source>
</reference>
<reference key="3">
    <citation type="journal article" date="2006" name="Mol. Syst. Biol.">
        <title>Highly accurate genome sequences of Escherichia coli K-12 strains MG1655 and W3110.</title>
        <authorList>
            <person name="Hayashi K."/>
            <person name="Morooka N."/>
            <person name="Yamamoto Y."/>
            <person name="Fujita K."/>
            <person name="Isono K."/>
            <person name="Choi S."/>
            <person name="Ohtsubo E."/>
            <person name="Baba T."/>
            <person name="Wanner B.L."/>
            <person name="Mori H."/>
            <person name="Horiuchi T."/>
        </authorList>
    </citation>
    <scope>NUCLEOTIDE SEQUENCE [LARGE SCALE GENOMIC DNA]</scope>
    <source>
        <strain>K12 / W3110 / ATCC 27325 / DSM 5911</strain>
    </source>
</reference>
<reference key="4">
    <citation type="journal article" date="2005" name="Science">
        <title>Global topology analysis of the Escherichia coli inner membrane proteome.</title>
        <authorList>
            <person name="Daley D.O."/>
            <person name="Rapp M."/>
            <person name="Granseth E."/>
            <person name="Melen K."/>
            <person name="Drew D."/>
            <person name="von Heijne G."/>
        </authorList>
    </citation>
    <scope>TOPOLOGY [LARGE SCALE ANALYSIS]</scope>
    <source>
        <strain>K12 / MG1655 / ATCC 47076</strain>
    </source>
</reference>
<gene>
    <name type="primary">ycjO</name>
    <name type="ordered locus">b1311</name>
    <name type="ordered locus">JW1304</name>
</gene>
<dbReference type="EMBL" id="U00096">
    <property type="protein sequence ID" value="AAC74393.1"/>
    <property type="molecule type" value="Genomic_DNA"/>
</dbReference>
<dbReference type="EMBL" id="AP009048">
    <property type="protein sequence ID" value="BAA14887.1"/>
    <property type="molecule type" value="Genomic_DNA"/>
</dbReference>
<dbReference type="PIR" id="B64880">
    <property type="entry name" value="B64880"/>
</dbReference>
<dbReference type="RefSeq" id="NP_415827.1">
    <property type="nucleotide sequence ID" value="NC_000913.3"/>
</dbReference>
<dbReference type="RefSeq" id="WP_001080790.1">
    <property type="nucleotide sequence ID" value="NZ_STEB01000005.1"/>
</dbReference>
<dbReference type="SMR" id="P0AFR7"/>
<dbReference type="BioGRID" id="4263232">
    <property type="interactions" value="8"/>
</dbReference>
<dbReference type="ComplexPortal" id="CPX-4389">
    <property type="entry name" value="YcjNOP ABC transporter complex"/>
</dbReference>
<dbReference type="FunCoup" id="P0AFR7">
    <property type="interactions" value="557"/>
</dbReference>
<dbReference type="STRING" id="511145.b1311"/>
<dbReference type="TCDB" id="3.A.1.1.46">
    <property type="family name" value="the atp-binding cassette (abc) superfamily"/>
</dbReference>
<dbReference type="PaxDb" id="511145-b1311"/>
<dbReference type="EnsemblBacteria" id="AAC74393">
    <property type="protein sequence ID" value="AAC74393"/>
    <property type="gene ID" value="b1311"/>
</dbReference>
<dbReference type="GeneID" id="945888"/>
<dbReference type="KEGG" id="ecj:JW1304"/>
<dbReference type="KEGG" id="eco:b1311"/>
<dbReference type="KEGG" id="ecoc:C3026_07685"/>
<dbReference type="PATRIC" id="fig|1411691.4.peg.968"/>
<dbReference type="EchoBASE" id="EB3671"/>
<dbReference type="eggNOG" id="COG1175">
    <property type="taxonomic scope" value="Bacteria"/>
</dbReference>
<dbReference type="HOGENOM" id="CLU_016047_0_3_6"/>
<dbReference type="InParanoid" id="P0AFR7"/>
<dbReference type="OMA" id="WLAYPFM"/>
<dbReference type="OrthoDB" id="8417460at2"/>
<dbReference type="PhylomeDB" id="P0AFR7"/>
<dbReference type="BioCyc" id="EcoCyc:YCJO-MONOMER"/>
<dbReference type="PRO" id="PR:P0AFR7"/>
<dbReference type="Proteomes" id="UP000000625">
    <property type="component" value="Chromosome"/>
</dbReference>
<dbReference type="GO" id="GO:0055052">
    <property type="term" value="C:ATP-binding cassette (ABC) transporter complex, substrate-binding subunit-containing"/>
    <property type="evidence" value="ECO:0000303"/>
    <property type="project" value="ComplexPortal"/>
</dbReference>
<dbReference type="GO" id="GO:0016020">
    <property type="term" value="C:membrane"/>
    <property type="evidence" value="ECO:0000303"/>
    <property type="project" value="ComplexPortal"/>
</dbReference>
<dbReference type="GO" id="GO:0005886">
    <property type="term" value="C:plasma membrane"/>
    <property type="evidence" value="ECO:0000314"/>
    <property type="project" value="EcoCyc"/>
</dbReference>
<dbReference type="GO" id="GO:0055085">
    <property type="term" value="P:transmembrane transport"/>
    <property type="evidence" value="ECO:0000303"/>
    <property type="project" value="ComplexPortal"/>
</dbReference>
<dbReference type="CDD" id="cd06261">
    <property type="entry name" value="TM_PBP2"/>
    <property type="match status" value="1"/>
</dbReference>
<dbReference type="FunFam" id="1.10.3720.10:FF:000041">
    <property type="entry name" value="Inner membrane ABC transporter permease ycjO"/>
    <property type="match status" value="1"/>
</dbReference>
<dbReference type="Gene3D" id="1.10.3720.10">
    <property type="entry name" value="MetI-like"/>
    <property type="match status" value="1"/>
</dbReference>
<dbReference type="InterPro" id="IPR000515">
    <property type="entry name" value="MetI-like"/>
</dbReference>
<dbReference type="InterPro" id="IPR035906">
    <property type="entry name" value="MetI-like_sf"/>
</dbReference>
<dbReference type="InterPro" id="IPR050809">
    <property type="entry name" value="UgpAE/MalFG_permease"/>
</dbReference>
<dbReference type="PANTHER" id="PTHR43227:SF7">
    <property type="entry name" value="ARABINOOLIGOSACCHARIDES TRANSPORT SYSTEM PERMEASE PROTEIN ARAP"/>
    <property type="match status" value="1"/>
</dbReference>
<dbReference type="PANTHER" id="PTHR43227">
    <property type="entry name" value="BLL4140 PROTEIN"/>
    <property type="match status" value="1"/>
</dbReference>
<dbReference type="Pfam" id="PF00528">
    <property type="entry name" value="BPD_transp_1"/>
    <property type="match status" value="1"/>
</dbReference>
<dbReference type="SUPFAM" id="SSF161098">
    <property type="entry name" value="MetI-like"/>
    <property type="match status" value="1"/>
</dbReference>
<dbReference type="PROSITE" id="PS50928">
    <property type="entry name" value="ABC_TM1"/>
    <property type="match status" value="1"/>
</dbReference>
<protein>
    <recommendedName>
        <fullName>Inner membrane ABC transporter permease protein YcjO</fullName>
    </recommendedName>
</protein>
<accession>P0AFR7</accession>
<accession>P76840</accession>
<accession>P77653</accession>
<comment type="function">
    <text>Probably part of the binding-protein-dependent transport system YcjNOP. Probably responsible for the translocation of the substrate across the membrane.</text>
</comment>
<comment type="subcellular location">
    <subcellularLocation>
        <location>Cell inner membrane</location>
        <topology>Multi-pass membrane protein</topology>
    </subcellularLocation>
</comment>
<comment type="similarity">
    <text evidence="3">Belongs to the binding-protein-dependent transport system permease family. MalFG subfamily.</text>
</comment>
<sequence length="293" mass="33225">MNRLFSGRSDMPFALLLLAPSLLLLGGLVAWPMVSNIEISFLRLPLNPNIESTFVGVSNYVRILSDPGFWHSLWMTVWYTALVVAGSTVLGLAVAMFFNREFRLRKTARSLVILSYVTPSISLVFAWKYMFNNGYGIVNYLGVDLLHLYEQAPLWFDNPGSSFVLVVLFAIWRYFPYAFISFLAILQTIDKSLYEAAEMDGANAWQRFRIVTLPAIMPVLATVVTLRTIWMFYMFADVYLLTTKVDILGVYLYKTAFAFNDLGKAAAISVVLFIIIFAVILLTRKRVNLNGNK</sequence>
<proteinExistence type="evidence at protein level"/>